<sequence>MSHNAPLVLMILDGWGYNENDRYNAIAKANTPQWDEWWQTCPHILLKASGLPVGLPDEQMGNSEVGHMHIGAGRVIQQDFTRINEAINNGKFAKNAVFHEVIDQLKKTEKSLHIMGLLSPGGVHSHEQHLFALLALCNQKKFRSVHLHLFLDGRDTPPQSALDSLKCLNEELAKHPVATINSICGRYYAMDRDKRWERVEPVYNLLTQGKSERQFPDAETAIHFYYKNKISDEFVPPTLIGKEHSIQDGDAVLFFNFRADRARQLTSTFLDPLFKGFERKTLPKLSCFVSMTQYDKNLFTTTAFPPVPLNNTLGEVLSSHGLSQLRIAETEKYAHVTFFFNGGCESVFTNEERIMVPSPQVATYDLQPEMSAHELTKTLIAAINSRDYHVIICNYANADMVGHTGNFEATVQAIECLDQCMQQVWQALKNNGGKLLITADHGNAEEMFSEATNQAHTAHTSEPVPFLYVGGGWHFTHSEGSLIDIAPSLLALLGITPPPEMTGRILLEKNHAHA</sequence>
<name>GPMI_LEGPA</name>
<accession>Q5X7P2</accession>
<evidence type="ECO:0000255" key="1">
    <source>
        <dbReference type="HAMAP-Rule" id="MF_01038"/>
    </source>
</evidence>
<dbReference type="EC" id="5.4.2.12" evidence="1"/>
<dbReference type="EMBL" id="CR628336">
    <property type="protein sequence ID" value="CAH11711.1"/>
    <property type="molecule type" value="Genomic_DNA"/>
</dbReference>
<dbReference type="RefSeq" id="WP_011213129.1">
    <property type="nucleotide sequence ID" value="NC_006368.1"/>
</dbReference>
<dbReference type="SMR" id="Q5X7P2"/>
<dbReference type="KEGG" id="lpp:lpp0563"/>
<dbReference type="LegioList" id="lpp0563"/>
<dbReference type="HOGENOM" id="CLU_026099_2_0_6"/>
<dbReference type="UniPathway" id="UPA00109">
    <property type="reaction ID" value="UER00186"/>
</dbReference>
<dbReference type="GO" id="GO:0005829">
    <property type="term" value="C:cytosol"/>
    <property type="evidence" value="ECO:0007669"/>
    <property type="project" value="TreeGrafter"/>
</dbReference>
<dbReference type="GO" id="GO:0030145">
    <property type="term" value="F:manganese ion binding"/>
    <property type="evidence" value="ECO:0007669"/>
    <property type="project" value="UniProtKB-UniRule"/>
</dbReference>
<dbReference type="GO" id="GO:0004619">
    <property type="term" value="F:phosphoglycerate mutase activity"/>
    <property type="evidence" value="ECO:0007669"/>
    <property type="project" value="UniProtKB-EC"/>
</dbReference>
<dbReference type="GO" id="GO:0006007">
    <property type="term" value="P:glucose catabolic process"/>
    <property type="evidence" value="ECO:0007669"/>
    <property type="project" value="InterPro"/>
</dbReference>
<dbReference type="GO" id="GO:0006096">
    <property type="term" value="P:glycolytic process"/>
    <property type="evidence" value="ECO:0007669"/>
    <property type="project" value="UniProtKB-UniRule"/>
</dbReference>
<dbReference type="CDD" id="cd16010">
    <property type="entry name" value="iPGM"/>
    <property type="match status" value="1"/>
</dbReference>
<dbReference type="FunFam" id="3.40.1450.10:FF:000002">
    <property type="entry name" value="2,3-bisphosphoglycerate-independent phosphoglycerate mutase"/>
    <property type="match status" value="1"/>
</dbReference>
<dbReference type="Gene3D" id="3.40.720.10">
    <property type="entry name" value="Alkaline Phosphatase, subunit A"/>
    <property type="match status" value="1"/>
</dbReference>
<dbReference type="Gene3D" id="3.40.1450.10">
    <property type="entry name" value="BPG-independent phosphoglycerate mutase, domain B"/>
    <property type="match status" value="1"/>
</dbReference>
<dbReference type="HAMAP" id="MF_01038">
    <property type="entry name" value="GpmI"/>
    <property type="match status" value="1"/>
</dbReference>
<dbReference type="InterPro" id="IPR017850">
    <property type="entry name" value="Alkaline_phosphatase_core_sf"/>
</dbReference>
<dbReference type="InterPro" id="IPR011258">
    <property type="entry name" value="BPG-indep_PGM_N"/>
</dbReference>
<dbReference type="InterPro" id="IPR006124">
    <property type="entry name" value="Metalloenzyme"/>
</dbReference>
<dbReference type="InterPro" id="IPR036646">
    <property type="entry name" value="PGAM_B_sf"/>
</dbReference>
<dbReference type="InterPro" id="IPR005995">
    <property type="entry name" value="Pgm_bpd_ind"/>
</dbReference>
<dbReference type="NCBIfam" id="TIGR01307">
    <property type="entry name" value="pgm_bpd_ind"/>
    <property type="match status" value="1"/>
</dbReference>
<dbReference type="PANTHER" id="PTHR31637">
    <property type="entry name" value="2,3-BISPHOSPHOGLYCERATE-INDEPENDENT PHOSPHOGLYCERATE MUTASE"/>
    <property type="match status" value="1"/>
</dbReference>
<dbReference type="PANTHER" id="PTHR31637:SF0">
    <property type="entry name" value="2,3-BISPHOSPHOGLYCERATE-INDEPENDENT PHOSPHOGLYCERATE MUTASE"/>
    <property type="match status" value="1"/>
</dbReference>
<dbReference type="Pfam" id="PF06415">
    <property type="entry name" value="iPGM_N"/>
    <property type="match status" value="1"/>
</dbReference>
<dbReference type="Pfam" id="PF01676">
    <property type="entry name" value="Metalloenzyme"/>
    <property type="match status" value="1"/>
</dbReference>
<dbReference type="PIRSF" id="PIRSF001492">
    <property type="entry name" value="IPGAM"/>
    <property type="match status" value="1"/>
</dbReference>
<dbReference type="SUPFAM" id="SSF64158">
    <property type="entry name" value="2,3-Bisphosphoglycerate-independent phosphoglycerate mutase, substrate-binding domain"/>
    <property type="match status" value="1"/>
</dbReference>
<dbReference type="SUPFAM" id="SSF53649">
    <property type="entry name" value="Alkaline phosphatase-like"/>
    <property type="match status" value="1"/>
</dbReference>
<keyword id="KW-0324">Glycolysis</keyword>
<keyword id="KW-0413">Isomerase</keyword>
<keyword id="KW-0464">Manganese</keyword>
<keyword id="KW-0479">Metal-binding</keyword>
<gene>
    <name evidence="1" type="primary">gpmI</name>
    <name type="ordered locus">lpp0563</name>
</gene>
<proteinExistence type="inferred from homology"/>
<organism>
    <name type="scientific">Legionella pneumophila (strain Paris)</name>
    <dbReference type="NCBI Taxonomy" id="297246"/>
    <lineage>
        <taxon>Bacteria</taxon>
        <taxon>Pseudomonadati</taxon>
        <taxon>Pseudomonadota</taxon>
        <taxon>Gammaproteobacteria</taxon>
        <taxon>Legionellales</taxon>
        <taxon>Legionellaceae</taxon>
        <taxon>Legionella</taxon>
    </lineage>
</organism>
<reference key="1">
    <citation type="journal article" date="2004" name="Nat. Genet.">
        <title>Evidence in the Legionella pneumophila genome for exploitation of host cell functions and high genome plasticity.</title>
        <authorList>
            <person name="Cazalet C."/>
            <person name="Rusniok C."/>
            <person name="Brueggemann H."/>
            <person name="Zidane N."/>
            <person name="Magnier A."/>
            <person name="Ma L."/>
            <person name="Tichit M."/>
            <person name="Jarraud S."/>
            <person name="Bouchier C."/>
            <person name="Vandenesch F."/>
            <person name="Kunst F."/>
            <person name="Etienne J."/>
            <person name="Glaser P."/>
            <person name="Buchrieser C."/>
        </authorList>
    </citation>
    <scope>NUCLEOTIDE SEQUENCE [LARGE SCALE GENOMIC DNA]</scope>
    <source>
        <strain>Paris</strain>
    </source>
</reference>
<comment type="function">
    <text evidence="1">Catalyzes the interconversion of 2-phosphoglycerate and 3-phosphoglycerate.</text>
</comment>
<comment type="catalytic activity">
    <reaction evidence="1">
        <text>(2R)-2-phosphoglycerate = (2R)-3-phosphoglycerate</text>
        <dbReference type="Rhea" id="RHEA:15901"/>
        <dbReference type="ChEBI" id="CHEBI:58272"/>
        <dbReference type="ChEBI" id="CHEBI:58289"/>
        <dbReference type="EC" id="5.4.2.12"/>
    </reaction>
</comment>
<comment type="cofactor">
    <cofactor evidence="1">
        <name>Mn(2+)</name>
        <dbReference type="ChEBI" id="CHEBI:29035"/>
    </cofactor>
    <text evidence="1">Binds 2 manganese ions per subunit.</text>
</comment>
<comment type="pathway">
    <text evidence="1">Carbohydrate degradation; glycolysis; pyruvate from D-glyceraldehyde 3-phosphate: step 3/5.</text>
</comment>
<comment type="subunit">
    <text evidence="1">Monomer.</text>
</comment>
<comment type="similarity">
    <text evidence="1">Belongs to the BPG-independent phosphoglycerate mutase family.</text>
</comment>
<feature type="chain" id="PRO_0000212158" description="2,3-bisphosphoglycerate-independent phosphoglycerate mutase">
    <location>
        <begin position="1"/>
        <end position="514"/>
    </location>
</feature>
<feature type="active site" description="Phosphoserine intermediate" evidence="1">
    <location>
        <position position="63"/>
    </location>
</feature>
<feature type="binding site" evidence="1">
    <location>
        <position position="13"/>
    </location>
    <ligand>
        <name>Mn(2+)</name>
        <dbReference type="ChEBI" id="CHEBI:29035"/>
        <label>2</label>
    </ligand>
</feature>
<feature type="binding site" evidence="1">
    <location>
        <position position="63"/>
    </location>
    <ligand>
        <name>Mn(2+)</name>
        <dbReference type="ChEBI" id="CHEBI:29035"/>
        <label>2</label>
    </ligand>
</feature>
<feature type="binding site" evidence="1">
    <location>
        <position position="124"/>
    </location>
    <ligand>
        <name>substrate</name>
    </ligand>
</feature>
<feature type="binding site" evidence="1">
    <location>
        <begin position="154"/>
        <end position="155"/>
    </location>
    <ligand>
        <name>substrate</name>
    </ligand>
</feature>
<feature type="binding site" evidence="1">
    <location>
        <position position="186"/>
    </location>
    <ligand>
        <name>substrate</name>
    </ligand>
</feature>
<feature type="binding site" evidence="1">
    <location>
        <position position="192"/>
    </location>
    <ligand>
        <name>substrate</name>
    </ligand>
</feature>
<feature type="binding site" evidence="1">
    <location>
        <begin position="258"/>
        <end position="261"/>
    </location>
    <ligand>
        <name>substrate</name>
    </ligand>
</feature>
<feature type="binding site" evidence="1">
    <location>
        <position position="332"/>
    </location>
    <ligand>
        <name>substrate</name>
    </ligand>
</feature>
<feature type="binding site" evidence="1">
    <location>
        <position position="399"/>
    </location>
    <ligand>
        <name>Mn(2+)</name>
        <dbReference type="ChEBI" id="CHEBI:29035"/>
        <label>1</label>
    </ligand>
</feature>
<feature type="binding site" evidence="1">
    <location>
        <position position="403"/>
    </location>
    <ligand>
        <name>Mn(2+)</name>
        <dbReference type="ChEBI" id="CHEBI:29035"/>
        <label>1</label>
    </ligand>
</feature>
<feature type="binding site" evidence="1">
    <location>
        <position position="440"/>
    </location>
    <ligand>
        <name>Mn(2+)</name>
        <dbReference type="ChEBI" id="CHEBI:29035"/>
        <label>2</label>
    </ligand>
</feature>
<feature type="binding site" evidence="1">
    <location>
        <position position="441"/>
    </location>
    <ligand>
        <name>Mn(2+)</name>
        <dbReference type="ChEBI" id="CHEBI:29035"/>
        <label>2</label>
    </ligand>
</feature>
<feature type="binding site" evidence="1">
    <location>
        <position position="459"/>
    </location>
    <ligand>
        <name>Mn(2+)</name>
        <dbReference type="ChEBI" id="CHEBI:29035"/>
        <label>1</label>
    </ligand>
</feature>
<protein>
    <recommendedName>
        <fullName evidence="1">2,3-bisphosphoglycerate-independent phosphoglycerate mutase</fullName>
        <shortName evidence="1">BPG-independent PGAM</shortName>
        <shortName evidence="1">Phosphoglyceromutase</shortName>
        <shortName evidence="1">iPGM</shortName>
        <ecNumber evidence="1">5.4.2.12</ecNumber>
    </recommendedName>
</protein>